<accession>A0L5X8</accession>
<gene>
    <name evidence="1" type="primary">rplV</name>
    <name type="ordered locus">Mmc1_0852</name>
</gene>
<sequence>MQEARATTKYQRVSPYKVRLVIDQIRGMQVESAMNLLAFSKKRVAGVVRQTLKSAVANAEENLGLDVDTLVVSQAYVDQGPSMKRFKPRARGRATRILKRTSHITVAVCPQVD</sequence>
<dbReference type="EMBL" id="CP000471">
    <property type="protein sequence ID" value="ABK43371.1"/>
    <property type="molecule type" value="Genomic_DNA"/>
</dbReference>
<dbReference type="RefSeq" id="WP_011712530.1">
    <property type="nucleotide sequence ID" value="NC_008576.1"/>
</dbReference>
<dbReference type="SMR" id="A0L5X8"/>
<dbReference type="STRING" id="156889.Mmc1_0852"/>
<dbReference type="KEGG" id="mgm:Mmc1_0852"/>
<dbReference type="eggNOG" id="COG0091">
    <property type="taxonomic scope" value="Bacteria"/>
</dbReference>
<dbReference type="HOGENOM" id="CLU_083987_3_3_5"/>
<dbReference type="OrthoDB" id="9805969at2"/>
<dbReference type="Proteomes" id="UP000002586">
    <property type="component" value="Chromosome"/>
</dbReference>
<dbReference type="GO" id="GO:0022625">
    <property type="term" value="C:cytosolic large ribosomal subunit"/>
    <property type="evidence" value="ECO:0007669"/>
    <property type="project" value="TreeGrafter"/>
</dbReference>
<dbReference type="GO" id="GO:0019843">
    <property type="term" value="F:rRNA binding"/>
    <property type="evidence" value="ECO:0007669"/>
    <property type="project" value="UniProtKB-UniRule"/>
</dbReference>
<dbReference type="GO" id="GO:0003735">
    <property type="term" value="F:structural constituent of ribosome"/>
    <property type="evidence" value="ECO:0007669"/>
    <property type="project" value="InterPro"/>
</dbReference>
<dbReference type="GO" id="GO:0006412">
    <property type="term" value="P:translation"/>
    <property type="evidence" value="ECO:0007669"/>
    <property type="project" value="UniProtKB-UniRule"/>
</dbReference>
<dbReference type="CDD" id="cd00336">
    <property type="entry name" value="Ribosomal_L22"/>
    <property type="match status" value="1"/>
</dbReference>
<dbReference type="Gene3D" id="3.90.470.10">
    <property type="entry name" value="Ribosomal protein L22/L17"/>
    <property type="match status" value="1"/>
</dbReference>
<dbReference type="HAMAP" id="MF_01331_B">
    <property type="entry name" value="Ribosomal_uL22_B"/>
    <property type="match status" value="1"/>
</dbReference>
<dbReference type="InterPro" id="IPR001063">
    <property type="entry name" value="Ribosomal_uL22"/>
</dbReference>
<dbReference type="InterPro" id="IPR005727">
    <property type="entry name" value="Ribosomal_uL22_bac/chlpt-type"/>
</dbReference>
<dbReference type="InterPro" id="IPR047867">
    <property type="entry name" value="Ribosomal_uL22_bac/org-type"/>
</dbReference>
<dbReference type="InterPro" id="IPR018260">
    <property type="entry name" value="Ribosomal_uL22_CS"/>
</dbReference>
<dbReference type="InterPro" id="IPR036394">
    <property type="entry name" value="Ribosomal_uL22_sf"/>
</dbReference>
<dbReference type="NCBIfam" id="TIGR01044">
    <property type="entry name" value="rplV_bact"/>
    <property type="match status" value="1"/>
</dbReference>
<dbReference type="PANTHER" id="PTHR13501">
    <property type="entry name" value="CHLOROPLAST 50S RIBOSOMAL PROTEIN L22-RELATED"/>
    <property type="match status" value="1"/>
</dbReference>
<dbReference type="PANTHER" id="PTHR13501:SF8">
    <property type="entry name" value="LARGE RIBOSOMAL SUBUNIT PROTEIN UL22M"/>
    <property type="match status" value="1"/>
</dbReference>
<dbReference type="Pfam" id="PF00237">
    <property type="entry name" value="Ribosomal_L22"/>
    <property type="match status" value="1"/>
</dbReference>
<dbReference type="SUPFAM" id="SSF54843">
    <property type="entry name" value="Ribosomal protein L22"/>
    <property type="match status" value="1"/>
</dbReference>
<dbReference type="PROSITE" id="PS00464">
    <property type="entry name" value="RIBOSOMAL_L22"/>
    <property type="match status" value="1"/>
</dbReference>
<evidence type="ECO:0000255" key="1">
    <source>
        <dbReference type="HAMAP-Rule" id="MF_01331"/>
    </source>
</evidence>
<evidence type="ECO:0000305" key="2"/>
<proteinExistence type="inferred from homology"/>
<comment type="function">
    <text evidence="1">This protein binds specifically to 23S rRNA; its binding is stimulated by other ribosomal proteins, e.g. L4, L17, and L20. It is important during the early stages of 50S assembly. It makes multiple contacts with different domains of the 23S rRNA in the assembled 50S subunit and ribosome (By similarity).</text>
</comment>
<comment type="function">
    <text evidence="1">The globular domain of the protein is located near the polypeptide exit tunnel on the outside of the subunit, while an extended beta-hairpin is found that lines the wall of the exit tunnel in the center of the 70S ribosome.</text>
</comment>
<comment type="subunit">
    <text evidence="1">Part of the 50S ribosomal subunit.</text>
</comment>
<comment type="similarity">
    <text evidence="1">Belongs to the universal ribosomal protein uL22 family.</text>
</comment>
<protein>
    <recommendedName>
        <fullName evidence="1">Large ribosomal subunit protein uL22</fullName>
    </recommendedName>
    <alternativeName>
        <fullName evidence="2">50S ribosomal protein L22</fullName>
    </alternativeName>
</protein>
<name>RL22_MAGMM</name>
<feature type="chain" id="PRO_0000354484" description="Large ribosomal subunit protein uL22">
    <location>
        <begin position="1"/>
        <end position="113"/>
    </location>
</feature>
<reference key="1">
    <citation type="journal article" date="2009" name="Appl. Environ. Microbiol.">
        <title>Complete genome sequence of the chemolithoautotrophic marine magnetotactic coccus strain MC-1.</title>
        <authorList>
            <person name="Schubbe S."/>
            <person name="Williams T.J."/>
            <person name="Xie G."/>
            <person name="Kiss H.E."/>
            <person name="Brettin T.S."/>
            <person name="Martinez D."/>
            <person name="Ross C.A."/>
            <person name="Schuler D."/>
            <person name="Cox B.L."/>
            <person name="Nealson K.H."/>
            <person name="Bazylinski D.A."/>
        </authorList>
    </citation>
    <scope>NUCLEOTIDE SEQUENCE [LARGE SCALE GENOMIC DNA]</scope>
    <source>
        <strain>ATCC BAA-1437 / JCM 17883 / MC-1</strain>
    </source>
</reference>
<keyword id="KW-1185">Reference proteome</keyword>
<keyword id="KW-0687">Ribonucleoprotein</keyword>
<keyword id="KW-0689">Ribosomal protein</keyword>
<keyword id="KW-0694">RNA-binding</keyword>
<keyword id="KW-0699">rRNA-binding</keyword>
<organism>
    <name type="scientific">Magnetococcus marinus (strain ATCC BAA-1437 / JCM 17883 / MC-1)</name>
    <dbReference type="NCBI Taxonomy" id="156889"/>
    <lineage>
        <taxon>Bacteria</taxon>
        <taxon>Pseudomonadati</taxon>
        <taxon>Pseudomonadota</taxon>
        <taxon>Alphaproteobacteria</taxon>
        <taxon>Magnetococcales</taxon>
        <taxon>Magnetococcaceae</taxon>
        <taxon>Magnetococcus</taxon>
    </lineage>
</organism>